<reference key="1">
    <citation type="journal article" date="1995" name="DNA Cell Biol.">
        <title>The nucleotide sequence, structure, and preliminary studies on the transcriptional regulation of the bovine alpha skeletal actin gene.</title>
        <authorList>
            <person name="Davey H.W."/>
            <person name="Kelly J.K."/>
            <person name="Wildeman A.G."/>
        </authorList>
    </citation>
    <scope>NUCLEOTIDE SEQUENCE [GENOMIC DNA]</scope>
    <source>
        <tissue>Liver</tissue>
    </source>
</reference>
<reference key="2">
    <citation type="submission" date="2005-08" db="EMBL/GenBank/DDBJ databases">
        <authorList>
            <consortium name="NIH - Mammalian Gene Collection (MGC) project"/>
        </authorList>
    </citation>
    <scope>NUCLEOTIDE SEQUENCE [LARGE SCALE MRNA]</scope>
    <source>
        <strain>Crossbred X Angus</strain>
        <tissue>Ileum</tissue>
    </source>
</reference>
<reference key="3">
    <citation type="journal article" date="1979" name="Differentiation">
        <title>The complete amino acid sequence of actins from bovine aorta, bovine heart, bovine fast skeletal muscle, and rabbit slow skeletal muscle. A protein-chemical analysis of muscle actin differentiation.</title>
        <authorList>
            <person name="Vandekerckhove J."/>
            <person name="Weber K."/>
        </authorList>
    </citation>
    <scope>PROTEIN SEQUENCE OF 3-377</scope>
    <scope>METHYLATION AT HIS-75</scope>
</reference>
<name>ACTS_BOVIN</name>
<feature type="initiator methionine" description="Removed">
    <location>
        <position position="1"/>
    </location>
</feature>
<feature type="chain" id="PRO_0000442801" description="Actin, alpha skeletal muscle, intermediate form" evidence="2">
    <location>
        <begin position="2"/>
        <end position="377"/>
    </location>
</feature>
<feature type="chain" id="PRO_0000442802" description="Actin, alpha skeletal muscle" evidence="7">
    <location>
        <begin position="3"/>
        <end position="377"/>
    </location>
</feature>
<feature type="region of interest" description="Interaction with alpha-actinin" evidence="5">
    <location>
        <begin position="112"/>
        <end position="125"/>
    </location>
</feature>
<feature type="region of interest" description="Interaction with alpha-actinin" evidence="5">
    <location>
        <begin position="360"/>
        <end position="372"/>
    </location>
</feature>
<feature type="modified residue" description="N-acetylcysteine; in intermediate form" evidence="2">
    <location>
        <position position="2"/>
    </location>
</feature>
<feature type="modified residue" description="Methionine (R)-sulfoxide" evidence="4">
    <location>
        <position position="46"/>
    </location>
</feature>
<feature type="modified residue" description="Methionine (R)-sulfoxide" evidence="4">
    <location>
        <position position="49"/>
    </location>
</feature>
<feature type="modified residue" description="N6-malonyllysine" evidence="1">
    <location>
        <position position="63"/>
    </location>
</feature>
<feature type="modified residue" description="Tele-methylhistidine" evidence="7">
    <location>
        <position position="75"/>
    </location>
</feature>
<feature type="modified residue" description="N6-methyllysine" evidence="3">
    <location>
        <position position="86"/>
    </location>
</feature>
<feature type="sequence conflict" description="In Ref. 1; AAA82873." evidence="8" ref="1">
    <original>A</original>
    <variation>R</variation>
    <location>
        <position position="349"/>
    </location>
</feature>
<evidence type="ECO:0000250" key="1"/>
<evidence type="ECO:0000250" key="2">
    <source>
        <dbReference type="UniProtKB" id="P62737"/>
    </source>
</evidence>
<evidence type="ECO:0000250" key="3">
    <source>
        <dbReference type="UniProtKB" id="P68133"/>
    </source>
</evidence>
<evidence type="ECO:0000250" key="4">
    <source>
        <dbReference type="UniProtKB" id="P68134"/>
    </source>
</evidence>
<evidence type="ECO:0000250" key="5">
    <source>
        <dbReference type="UniProtKB" id="P68135"/>
    </source>
</evidence>
<evidence type="ECO:0000250" key="6">
    <source>
        <dbReference type="UniProtKB" id="P68137"/>
    </source>
</evidence>
<evidence type="ECO:0000269" key="7">
    <source>
    </source>
</evidence>
<evidence type="ECO:0000305" key="8"/>
<keyword id="KW-0002">3D-structure</keyword>
<keyword id="KW-0007">Acetylation</keyword>
<keyword id="KW-0067">ATP-binding</keyword>
<keyword id="KW-0963">Cytoplasm</keyword>
<keyword id="KW-0206">Cytoskeleton</keyword>
<keyword id="KW-0903">Direct protein sequencing</keyword>
<keyword id="KW-0378">Hydrolase</keyword>
<keyword id="KW-0488">Methylation</keyword>
<keyword id="KW-0514">Muscle protein</keyword>
<keyword id="KW-0547">Nucleotide-binding</keyword>
<keyword id="KW-0558">Oxidation</keyword>
<keyword id="KW-1185">Reference proteome</keyword>
<dbReference type="EC" id="3.6.4.-" evidence="6"/>
<dbReference type="EMBL" id="U02285">
    <property type="protein sequence ID" value="AAA82873.1"/>
    <property type="molecule type" value="Genomic_DNA"/>
</dbReference>
<dbReference type="EMBL" id="BC102376">
    <property type="protein sequence ID" value="AAI02377.1"/>
    <property type="molecule type" value="mRNA"/>
</dbReference>
<dbReference type="RefSeq" id="NP_776650.1">
    <property type="nucleotide sequence ID" value="NM_174225.1"/>
</dbReference>
<dbReference type="RefSeq" id="XP_005226249.1">
    <property type="nucleotide sequence ID" value="XM_005226192.2"/>
</dbReference>
<dbReference type="PDB" id="8VAA">
    <property type="method" value="EM"/>
    <property type="resolution" value="3.58 A"/>
    <property type="chains" value="A/B/C/D/E/F/G/H/I/J=7-376"/>
</dbReference>
<dbReference type="PDBsum" id="8VAA"/>
<dbReference type="EMDB" id="EMD-43087"/>
<dbReference type="SMR" id="P68138"/>
<dbReference type="BioGRID" id="158912">
    <property type="interactions" value="1"/>
</dbReference>
<dbReference type="FunCoup" id="P68138">
    <property type="interactions" value="377"/>
</dbReference>
<dbReference type="STRING" id="9913.ENSBTAP00000006532"/>
<dbReference type="PaxDb" id="9913-ENSBTAP00000006532"/>
<dbReference type="PeptideAtlas" id="P68138"/>
<dbReference type="Ensembl" id="ENSBTAT00000006534.3">
    <property type="protein sequence ID" value="ENSBTAP00000006534.2"/>
    <property type="gene ID" value="ENSBTAG00000046332.3"/>
</dbReference>
<dbReference type="GeneID" id="281592"/>
<dbReference type="KEGG" id="bta:281592"/>
<dbReference type="CTD" id="58"/>
<dbReference type="VEuPathDB" id="HostDB:ENSBTAG00000046332"/>
<dbReference type="VGNC" id="VGNC:25573">
    <property type="gene designation" value="ACTA1"/>
</dbReference>
<dbReference type="eggNOG" id="KOG0676">
    <property type="taxonomic scope" value="Eukaryota"/>
</dbReference>
<dbReference type="GeneTree" id="ENSGT00940000156048"/>
<dbReference type="HOGENOM" id="CLU_027965_0_2_1"/>
<dbReference type="InParanoid" id="P68138"/>
<dbReference type="OMA" id="EDAPRCC"/>
<dbReference type="OrthoDB" id="9971293at2759"/>
<dbReference type="TreeFam" id="TF354237"/>
<dbReference type="Reactome" id="R-BTA-390522">
    <property type="pathway name" value="Striated Muscle Contraction"/>
</dbReference>
<dbReference type="Reactome" id="R-BTA-9913351">
    <property type="pathway name" value="Formation of the dystrophin-glycoprotein complex (DGC)"/>
</dbReference>
<dbReference type="Proteomes" id="UP000009136">
    <property type="component" value="Chromosome 28"/>
</dbReference>
<dbReference type="Bgee" id="ENSBTAG00000046332">
    <property type="expression patterns" value="Expressed in biceps femoris and 96 other cell types or tissues"/>
</dbReference>
<dbReference type="GO" id="GO:0015629">
    <property type="term" value="C:actin cytoskeleton"/>
    <property type="evidence" value="ECO:0000318"/>
    <property type="project" value="GO_Central"/>
</dbReference>
<dbReference type="GO" id="GO:0005884">
    <property type="term" value="C:actin filament"/>
    <property type="evidence" value="ECO:0000250"/>
    <property type="project" value="UniProtKB"/>
</dbReference>
<dbReference type="GO" id="GO:0044297">
    <property type="term" value="C:cell body"/>
    <property type="evidence" value="ECO:0000250"/>
    <property type="project" value="AgBase"/>
</dbReference>
<dbReference type="GO" id="GO:0005737">
    <property type="term" value="C:cytoplasm"/>
    <property type="evidence" value="ECO:0000250"/>
    <property type="project" value="AgBase"/>
</dbReference>
<dbReference type="GO" id="GO:0005829">
    <property type="term" value="C:cytosol"/>
    <property type="evidence" value="ECO:0000304"/>
    <property type="project" value="Reactome"/>
</dbReference>
<dbReference type="GO" id="GO:0030175">
    <property type="term" value="C:filopodium"/>
    <property type="evidence" value="ECO:0000250"/>
    <property type="project" value="AgBase"/>
</dbReference>
<dbReference type="GO" id="GO:0030027">
    <property type="term" value="C:lamellipodium"/>
    <property type="evidence" value="ECO:0000250"/>
    <property type="project" value="AgBase"/>
</dbReference>
<dbReference type="GO" id="GO:0001725">
    <property type="term" value="C:stress fiber"/>
    <property type="evidence" value="ECO:0000250"/>
    <property type="project" value="UniProtKB"/>
</dbReference>
<dbReference type="GO" id="GO:0005865">
    <property type="term" value="C:striated muscle thin filament"/>
    <property type="evidence" value="ECO:0000250"/>
    <property type="project" value="UniProtKB"/>
</dbReference>
<dbReference type="GO" id="GO:0005524">
    <property type="term" value="F:ATP binding"/>
    <property type="evidence" value="ECO:0007669"/>
    <property type="project" value="UniProtKB-KW"/>
</dbReference>
<dbReference type="GO" id="GO:0016787">
    <property type="term" value="F:hydrolase activity"/>
    <property type="evidence" value="ECO:0007669"/>
    <property type="project" value="UniProtKB-KW"/>
</dbReference>
<dbReference type="GO" id="GO:0090131">
    <property type="term" value="P:mesenchyme migration"/>
    <property type="evidence" value="ECO:0000250"/>
    <property type="project" value="AgBase"/>
</dbReference>
<dbReference type="GO" id="GO:0010628">
    <property type="term" value="P:positive regulation of gene expression"/>
    <property type="evidence" value="ECO:0000250"/>
    <property type="project" value="AgBase"/>
</dbReference>
<dbReference type="GO" id="GO:0048741">
    <property type="term" value="P:skeletal muscle fiber development"/>
    <property type="evidence" value="ECO:0000250"/>
    <property type="project" value="UniProtKB"/>
</dbReference>
<dbReference type="GO" id="GO:0030240">
    <property type="term" value="P:skeletal muscle thin filament assembly"/>
    <property type="evidence" value="ECO:0000250"/>
    <property type="project" value="UniProtKB"/>
</dbReference>
<dbReference type="CDD" id="cd10224">
    <property type="entry name" value="ASKHA_NBD_actin"/>
    <property type="match status" value="1"/>
</dbReference>
<dbReference type="FunFam" id="3.30.420.40:FF:000131">
    <property type="entry name" value="Actin, alpha skeletal muscle"/>
    <property type="match status" value="1"/>
</dbReference>
<dbReference type="FunFam" id="3.30.420.40:FF:000291">
    <property type="entry name" value="Actin, alpha skeletal muscle"/>
    <property type="match status" value="1"/>
</dbReference>
<dbReference type="FunFam" id="3.90.640.10:FF:000047">
    <property type="entry name" value="Actin, alpha skeletal muscle"/>
    <property type="match status" value="1"/>
</dbReference>
<dbReference type="FunFam" id="3.30.420.40:FF:000058">
    <property type="entry name" value="Putative actin-related protein 5"/>
    <property type="match status" value="1"/>
</dbReference>
<dbReference type="Gene3D" id="3.30.420.40">
    <property type="match status" value="2"/>
</dbReference>
<dbReference type="Gene3D" id="3.90.640.10">
    <property type="entry name" value="Actin, Chain A, domain 4"/>
    <property type="match status" value="1"/>
</dbReference>
<dbReference type="InterPro" id="IPR004000">
    <property type="entry name" value="Actin"/>
</dbReference>
<dbReference type="InterPro" id="IPR020902">
    <property type="entry name" value="Actin/actin-like_CS"/>
</dbReference>
<dbReference type="InterPro" id="IPR004001">
    <property type="entry name" value="Actin_CS"/>
</dbReference>
<dbReference type="InterPro" id="IPR043129">
    <property type="entry name" value="ATPase_NBD"/>
</dbReference>
<dbReference type="PANTHER" id="PTHR11937">
    <property type="entry name" value="ACTIN"/>
    <property type="match status" value="1"/>
</dbReference>
<dbReference type="Pfam" id="PF00022">
    <property type="entry name" value="Actin"/>
    <property type="match status" value="1"/>
</dbReference>
<dbReference type="PRINTS" id="PR00190">
    <property type="entry name" value="ACTIN"/>
</dbReference>
<dbReference type="SMART" id="SM00268">
    <property type="entry name" value="ACTIN"/>
    <property type="match status" value="1"/>
</dbReference>
<dbReference type="SUPFAM" id="SSF53067">
    <property type="entry name" value="Actin-like ATPase domain"/>
    <property type="match status" value="2"/>
</dbReference>
<dbReference type="PROSITE" id="PS00406">
    <property type="entry name" value="ACTINS_1"/>
    <property type="match status" value="1"/>
</dbReference>
<dbReference type="PROSITE" id="PS00432">
    <property type="entry name" value="ACTINS_2"/>
    <property type="match status" value="1"/>
</dbReference>
<dbReference type="PROSITE" id="PS01132">
    <property type="entry name" value="ACTINS_ACT_LIKE"/>
    <property type="match status" value="1"/>
</dbReference>
<gene>
    <name type="primary">ACTA1</name>
    <name type="synonym">ACTA</name>
</gene>
<proteinExistence type="evidence at protein level"/>
<sequence length="377" mass="42051">MCDEDETTALVCDNGSGLVKAGFAGDDAPRAVFPSIVGRPRHQGVMVGMGQKDSYVGDEAQSKRGILTLKYPIEHGIITNWDDMEKIWHHTFYNELRVAPEEHPTLLTEAPLNPKANREKMTQIMFETFNVPAMYVAIQAVLSLYASGRTTGIVLDSGDGVTHNVPIYEGYALPHAIMRLDLAGRDLTDYLMKILTERGYSFVTTAEREIVRDIKEKLCYVALDFENEMATAASSSSLEKSYELPDGQVITIGNERFRCPETLFQPSFIGMESAGIHETTYNSIMKCDIDIRKDLYANNVMSGGTTMYPGIADRMQKEITALAPSTMKIKIIAPPERKYSVWIGGSILASLSTFQQMWITKQEYDEAGPSIVHRKCF</sequence>
<accession>P68138</accession>
<accession>P02568</accession>
<accession>P99020</accession>
<accession>Q3ZCG3</accession>
<comment type="function">
    <text>Actins are highly conserved proteins that are involved in various types of cell motility and are ubiquitously expressed in all eukaryotic cells.</text>
</comment>
<comment type="catalytic activity">
    <reaction evidence="6">
        <text>ATP + H2O = ADP + phosphate + H(+)</text>
        <dbReference type="Rhea" id="RHEA:13065"/>
        <dbReference type="ChEBI" id="CHEBI:15377"/>
        <dbReference type="ChEBI" id="CHEBI:15378"/>
        <dbReference type="ChEBI" id="CHEBI:30616"/>
        <dbReference type="ChEBI" id="CHEBI:43474"/>
        <dbReference type="ChEBI" id="CHEBI:456216"/>
    </reaction>
</comment>
<comment type="subunit">
    <text evidence="3 5">Polymerization of globular actin (G-actin) leads to a structural filament (F-actin) in the form of a two-stranded helix. Each actin can bind to 4 others (By similarity). Interacts with alpha-actinin. Identified in a complex composed of ACTA1, COBL, GSN AND TMSB4X (By similarity). Interacts with TTID. Interacts (via its C-terminus) with USP25 (By similarity).</text>
</comment>
<comment type="subcellular location">
    <subcellularLocation>
        <location>Cytoplasm</location>
        <location>Cytoskeleton</location>
    </subcellularLocation>
</comment>
<comment type="PTM">
    <molecule>Actin, alpha skeletal muscle, intermediate form</molecule>
    <text evidence="4">N-terminal cleavage of acetylated cysteine of intermediate muscle actin by ACTMAP.</text>
</comment>
<comment type="PTM">
    <text evidence="4">Oxidation of Met-46 and Met-49 by MICALs (MICAL1, MICAL2 or MICAL3) to form methionine sulfoxide promotes actin filament depolymerization. MICAL1 and MICAL2 produce the (R)-S-oxide form. The (R)-S-oxide form is reverted by MSRB1 and MSRB2, which promotes actin repolymerization.</text>
</comment>
<comment type="PTM">
    <text evidence="3">Monomethylation at Lys-86 (K84me1) regulates actin-myosin interaction and actomyosin-dependent processes. Demethylation by ALKBH4 is required for maintaining actomyosin dynamics supporting normal cleavage furrow ingression during cytokinesis and cell migration.</text>
</comment>
<comment type="PTM">
    <text evidence="3">Methylated at His-75 by SETD3.</text>
</comment>
<comment type="miscellaneous">
    <text>In vertebrates 3 main groups of actin isoforms, alpha, beta and gamma have been identified. The alpha actins are found in muscle tissues and are a major constituent of the contractile apparatus. The beta and gamma actins coexist in most cell types as components of the cytoskeleton and as mediators of internal cell motility.</text>
</comment>
<comment type="similarity">
    <text evidence="8">Belongs to the actin family.</text>
</comment>
<protein>
    <recommendedName>
        <fullName>Actin, alpha skeletal muscle</fullName>
        <ecNumber evidence="6">3.6.4.-</ecNumber>
    </recommendedName>
    <alternativeName>
        <fullName>Alpha-actin-1</fullName>
    </alternativeName>
    <component>
        <recommendedName>
            <fullName>Actin, alpha skeletal muscle, intermediate form</fullName>
        </recommendedName>
    </component>
</protein>
<organism>
    <name type="scientific">Bos taurus</name>
    <name type="common">Bovine</name>
    <dbReference type="NCBI Taxonomy" id="9913"/>
    <lineage>
        <taxon>Eukaryota</taxon>
        <taxon>Metazoa</taxon>
        <taxon>Chordata</taxon>
        <taxon>Craniata</taxon>
        <taxon>Vertebrata</taxon>
        <taxon>Euteleostomi</taxon>
        <taxon>Mammalia</taxon>
        <taxon>Eutheria</taxon>
        <taxon>Laurasiatheria</taxon>
        <taxon>Artiodactyla</taxon>
        <taxon>Ruminantia</taxon>
        <taxon>Pecora</taxon>
        <taxon>Bovidae</taxon>
        <taxon>Bovinae</taxon>
        <taxon>Bos</taxon>
    </lineage>
</organism>